<evidence type="ECO:0000255" key="1">
    <source>
        <dbReference type="HAMAP-Rule" id="MF_00244"/>
    </source>
</evidence>
<reference key="1">
    <citation type="submission" date="2007-07" db="EMBL/GenBank/DDBJ databases">
        <title>Complete sequence of Fervidobacterium nodosum Rt17-B1.</title>
        <authorList>
            <consortium name="US DOE Joint Genome Institute"/>
            <person name="Copeland A."/>
            <person name="Lucas S."/>
            <person name="Lapidus A."/>
            <person name="Barry K."/>
            <person name="Glavina del Rio T."/>
            <person name="Dalin E."/>
            <person name="Tice H."/>
            <person name="Pitluck S."/>
            <person name="Saunders E."/>
            <person name="Brettin T."/>
            <person name="Bruce D."/>
            <person name="Detter J.C."/>
            <person name="Han C."/>
            <person name="Schmutz J."/>
            <person name="Larimer F."/>
            <person name="Land M."/>
            <person name="Hauser L."/>
            <person name="Kyrpides N."/>
            <person name="Mikhailova N."/>
            <person name="Nelson K."/>
            <person name="Gogarten J.P."/>
            <person name="Noll K."/>
            <person name="Richardson P."/>
        </authorList>
    </citation>
    <scope>NUCLEOTIDE SEQUENCE [LARGE SCALE GENOMIC DNA]</scope>
    <source>
        <strain>ATCC 35602 / DSM 5306 / Rt17-B1</strain>
    </source>
</reference>
<name>NADD_FERNB</name>
<organism>
    <name type="scientific">Fervidobacterium nodosum (strain ATCC 35602 / DSM 5306 / Rt17-B1)</name>
    <dbReference type="NCBI Taxonomy" id="381764"/>
    <lineage>
        <taxon>Bacteria</taxon>
        <taxon>Thermotogati</taxon>
        <taxon>Thermotogota</taxon>
        <taxon>Thermotogae</taxon>
        <taxon>Thermotogales</taxon>
        <taxon>Fervidobacteriaceae</taxon>
        <taxon>Fervidobacterium</taxon>
    </lineage>
</organism>
<comment type="function">
    <text evidence="1">Catalyzes the reversible adenylation of nicotinate mononucleotide (NaMN) to nicotinic acid adenine dinucleotide (NaAD).</text>
</comment>
<comment type="catalytic activity">
    <reaction evidence="1">
        <text>nicotinate beta-D-ribonucleotide + ATP + H(+) = deamido-NAD(+) + diphosphate</text>
        <dbReference type="Rhea" id="RHEA:22860"/>
        <dbReference type="ChEBI" id="CHEBI:15378"/>
        <dbReference type="ChEBI" id="CHEBI:30616"/>
        <dbReference type="ChEBI" id="CHEBI:33019"/>
        <dbReference type="ChEBI" id="CHEBI:57502"/>
        <dbReference type="ChEBI" id="CHEBI:58437"/>
        <dbReference type="EC" id="2.7.7.18"/>
    </reaction>
</comment>
<comment type="pathway">
    <text evidence="1">Cofactor biosynthesis; NAD(+) biosynthesis; deamido-NAD(+) from nicotinate D-ribonucleotide: step 1/1.</text>
</comment>
<comment type="similarity">
    <text evidence="1">Belongs to the NadD family.</text>
</comment>
<sequence length="215" mass="25157">MTSFSKSDTCVIFGGSFNPPHIGHTVILSYALDYFNADFYIIPTKTPPHKVVDIDFDKRFEWVMKSFKCFDTYKKNQIFLWDLEKHIFGVNYAIKNVEYFRKYYSNTIILVGEDALGNIEKWYKYEELLNITTFAIYPRTRDGSLYKRGQQILGNLYSNVIELRDFPLIEISSSDIRKRIVEGKSIIGFVDGEILEDVTNTYLMHHKSHGGNWNE</sequence>
<accession>A7HJZ9</accession>
<feature type="chain" id="PRO_0000336689" description="Probable nicotinate-nucleotide adenylyltransferase">
    <location>
        <begin position="1"/>
        <end position="215"/>
    </location>
</feature>
<proteinExistence type="inferred from homology"/>
<gene>
    <name evidence="1" type="primary">nadD</name>
    <name type="ordered locus">Fnod_0367</name>
</gene>
<dbReference type="EC" id="2.7.7.18" evidence="1"/>
<dbReference type="EMBL" id="CP000771">
    <property type="protein sequence ID" value="ABS60232.1"/>
    <property type="molecule type" value="Genomic_DNA"/>
</dbReference>
<dbReference type="SMR" id="A7HJZ9"/>
<dbReference type="STRING" id="381764.Fnod_0367"/>
<dbReference type="KEGG" id="fno:Fnod_0367"/>
<dbReference type="eggNOG" id="COG1057">
    <property type="taxonomic scope" value="Bacteria"/>
</dbReference>
<dbReference type="HOGENOM" id="CLU_069765_3_2_0"/>
<dbReference type="OrthoDB" id="5295945at2"/>
<dbReference type="UniPathway" id="UPA00253">
    <property type="reaction ID" value="UER00332"/>
</dbReference>
<dbReference type="Proteomes" id="UP000002415">
    <property type="component" value="Chromosome"/>
</dbReference>
<dbReference type="GO" id="GO:0005524">
    <property type="term" value="F:ATP binding"/>
    <property type="evidence" value="ECO:0007669"/>
    <property type="project" value="UniProtKB-KW"/>
</dbReference>
<dbReference type="GO" id="GO:0004515">
    <property type="term" value="F:nicotinate-nucleotide adenylyltransferase activity"/>
    <property type="evidence" value="ECO:0007669"/>
    <property type="project" value="UniProtKB-UniRule"/>
</dbReference>
<dbReference type="GO" id="GO:0009435">
    <property type="term" value="P:NAD biosynthetic process"/>
    <property type="evidence" value="ECO:0007669"/>
    <property type="project" value="UniProtKB-UniRule"/>
</dbReference>
<dbReference type="CDD" id="cd02165">
    <property type="entry name" value="NMNAT"/>
    <property type="match status" value="1"/>
</dbReference>
<dbReference type="Gene3D" id="3.40.50.620">
    <property type="entry name" value="HUPs"/>
    <property type="match status" value="1"/>
</dbReference>
<dbReference type="HAMAP" id="MF_00244">
    <property type="entry name" value="NaMN_adenylyltr"/>
    <property type="match status" value="1"/>
</dbReference>
<dbReference type="InterPro" id="IPR004821">
    <property type="entry name" value="Cyt_trans-like"/>
</dbReference>
<dbReference type="InterPro" id="IPR005248">
    <property type="entry name" value="NadD/NMNAT"/>
</dbReference>
<dbReference type="InterPro" id="IPR014729">
    <property type="entry name" value="Rossmann-like_a/b/a_fold"/>
</dbReference>
<dbReference type="PANTHER" id="PTHR39321">
    <property type="entry name" value="NICOTINATE-NUCLEOTIDE ADENYLYLTRANSFERASE-RELATED"/>
    <property type="match status" value="1"/>
</dbReference>
<dbReference type="PANTHER" id="PTHR39321:SF3">
    <property type="entry name" value="PHOSPHOPANTETHEINE ADENYLYLTRANSFERASE"/>
    <property type="match status" value="1"/>
</dbReference>
<dbReference type="Pfam" id="PF01467">
    <property type="entry name" value="CTP_transf_like"/>
    <property type="match status" value="1"/>
</dbReference>
<dbReference type="SUPFAM" id="SSF52374">
    <property type="entry name" value="Nucleotidylyl transferase"/>
    <property type="match status" value="1"/>
</dbReference>
<keyword id="KW-0067">ATP-binding</keyword>
<keyword id="KW-0520">NAD</keyword>
<keyword id="KW-0547">Nucleotide-binding</keyword>
<keyword id="KW-0548">Nucleotidyltransferase</keyword>
<keyword id="KW-0662">Pyridine nucleotide biosynthesis</keyword>
<keyword id="KW-1185">Reference proteome</keyword>
<keyword id="KW-0808">Transferase</keyword>
<protein>
    <recommendedName>
        <fullName evidence="1">Probable nicotinate-nucleotide adenylyltransferase</fullName>
        <ecNumber evidence="1">2.7.7.18</ecNumber>
    </recommendedName>
    <alternativeName>
        <fullName evidence="1">Deamido-NAD(+) diphosphorylase</fullName>
    </alternativeName>
    <alternativeName>
        <fullName evidence="1">Deamido-NAD(+) pyrophosphorylase</fullName>
    </alternativeName>
    <alternativeName>
        <fullName evidence="1">Nicotinate mononucleotide adenylyltransferase</fullName>
        <shortName evidence="1">NaMN adenylyltransferase</shortName>
    </alternativeName>
</protein>